<keyword id="KW-0067">ATP-binding</keyword>
<keyword id="KW-0143">Chaperone</keyword>
<keyword id="KW-0963">Cytoplasm</keyword>
<keyword id="KW-0547">Nucleotide-binding</keyword>
<keyword id="KW-1185">Reference proteome</keyword>
<keyword id="KW-0346">Stress response</keyword>
<dbReference type="EMBL" id="CP000462">
    <property type="protein sequence ID" value="ABK37956.1"/>
    <property type="molecule type" value="Genomic_DNA"/>
</dbReference>
<dbReference type="RefSeq" id="WP_011707776.1">
    <property type="nucleotide sequence ID" value="NC_008570.1"/>
</dbReference>
<dbReference type="RefSeq" id="YP_858539.1">
    <property type="nucleotide sequence ID" value="NC_008570.1"/>
</dbReference>
<dbReference type="SMR" id="A0KQI8"/>
<dbReference type="STRING" id="380703.AHA_4115"/>
<dbReference type="EnsemblBacteria" id="ABK37956">
    <property type="protein sequence ID" value="ABK37956"/>
    <property type="gene ID" value="AHA_4115"/>
</dbReference>
<dbReference type="GeneID" id="4488132"/>
<dbReference type="KEGG" id="aha:AHA_4115"/>
<dbReference type="PATRIC" id="fig|380703.7.peg.4072"/>
<dbReference type="eggNOG" id="COG1220">
    <property type="taxonomic scope" value="Bacteria"/>
</dbReference>
<dbReference type="HOGENOM" id="CLU_033123_0_0_6"/>
<dbReference type="OrthoDB" id="9804062at2"/>
<dbReference type="Proteomes" id="UP000000756">
    <property type="component" value="Chromosome"/>
</dbReference>
<dbReference type="GO" id="GO:0009376">
    <property type="term" value="C:HslUV protease complex"/>
    <property type="evidence" value="ECO:0007669"/>
    <property type="project" value="UniProtKB-UniRule"/>
</dbReference>
<dbReference type="GO" id="GO:0005524">
    <property type="term" value="F:ATP binding"/>
    <property type="evidence" value="ECO:0007669"/>
    <property type="project" value="UniProtKB-UniRule"/>
</dbReference>
<dbReference type="GO" id="GO:0016887">
    <property type="term" value="F:ATP hydrolysis activity"/>
    <property type="evidence" value="ECO:0007669"/>
    <property type="project" value="InterPro"/>
</dbReference>
<dbReference type="GO" id="GO:0008233">
    <property type="term" value="F:peptidase activity"/>
    <property type="evidence" value="ECO:0007669"/>
    <property type="project" value="InterPro"/>
</dbReference>
<dbReference type="GO" id="GO:0036402">
    <property type="term" value="F:proteasome-activating activity"/>
    <property type="evidence" value="ECO:0007669"/>
    <property type="project" value="UniProtKB-UniRule"/>
</dbReference>
<dbReference type="GO" id="GO:0043335">
    <property type="term" value="P:protein unfolding"/>
    <property type="evidence" value="ECO:0007669"/>
    <property type="project" value="UniProtKB-UniRule"/>
</dbReference>
<dbReference type="GO" id="GO:0051603">
    <property type="term" value="P:proteolysis involved in protein catabolic process"/>
    <property type="evidence" value="ECO:0007669"/>
    <property type="project" value="TreeGrafter"/>
</dbReference>
<dbReference type="CDD" id="cd19498">
    <property type="entry name" value="RecA-like_HslU"/>
    <property type="match status" value="1"/>
</dbReference>
<dbReference type="FunFam" id="1.10.8.10:FF:000028">
    <property type="entry name" value="ATP-dependent protease ATPase subunit HslU"/>
    <property type="match status" value="1"/>
</dbReference>
<dbReference type="FunFam" id="1.10.8.60:FF:000027">
    <property type="entry name" value="ATP-dependent protease ATPase subunit HslU"/>
    <property type="match status" value="1"/>
</dbReference>
<dbReference type="FunFam" id="3.40.50.300:FF:000213">
    <property type="entry name" value="ATP-dependent protease ATPase subunit HslU"/>
    <property type="match status" value="1"/>
</dbReference>
<dbReference type="FunFam" id="3.40.50.300:FF:000220">
    <property type="entry name" value="ATP-dependent protease ATPase subunit HslU"/>
    <property type="match status" value="1"/>
</dbReference>
<dbReference type="Gene3D" id="1.10.8.60">
    <property type="match status" value="1"/>
</dbReference>
<dbReference type="Gene3D" id="1.10.8.10">
    <property type="entry name" value="DNA helicase RuvA subunit, C-terminal domain"/>
    <property type="match status" value="1"/>
</dbReference>
<dbReference type="Gene3D" id="3.40.50.300">
    <property type="entry name" value="P-loop containing nucleotide triphosphate hydrolases"/>
    <property type="match status" value="2"/>
</dbReference>
<dbReference type="HAMAP" id="MF_00249">
    <property type="entry name" value="HslU"/>
    <property type="match status" value="1"/>
</dbReference>
<dbReference type="InterPro" id="IPR003593">
    <property type="entry name" value="AAA+_ATPase"/>
</dbReference>
<dbReference type="InterPro" id="IPR050052">
    <property type="entry name" value="ATP-dep_Clp_protease_ClpX"/>
</dbReference>
<dbReference type="InterPro" id="IPR003959">
    <property type="entry name" value="ATPase_AAA_core"/>
</dbReference>
<dbReference type="InterPro" id="IPR019489">
    <property type="entry name" value="Clp_ATPase_C"/>
</dbReference>
<dbReference type="InterPro" id="IPR004491">
    <property type="entry name" value="HslU"/>
</dbReference>
<dbReference type="InterPro" id="IPR027417">
    <property type="entry name" value="P-loop_NTPase"/>
</dbReference>
<dbReference type="NCBIfam" id="TIGR00390">
    <property type="entry name" value="hslU"/>
    <property type="match status" value="1"/>
</dbReference>
<dbReference type="NCBIfam" id="NF003544">
    <property type="entry name" value="PRK05201.1"/>
    <property type="match status" value="1"/>
</dbReference>
<dbReference type="PANTHER" id="PTHR48102">
    <property type="entry name" value="ATP-DEPENDENT CLP PROTEASE ATP-BINDING SUBUNIT CLPX-LIKE, MITOCHONDRIAL-RELATED"/>
    <property type="match status" value="1"/>
</dbReference>
<dbReference type="PANTHER" id="PTHR48102:SF3">
    <property type="entry name" value="ATP-DEPENDENT PROTEASE ATPASE SUBUNIT HSLU"/>
    <property type="match status" value="1"/>
</dbReference>
<dbReference type="Pfam" id="PF00004">
    <property type="entry name" value="AAA"/>
    <property type="match status" value="1"/>
</dbReference>
<dbReference type="Pfam" id="PF07724">
    <property type="entry name" value="AAA_2"/>
    <property type="match status" value="1"/>
</dbReference>
<dbReference type="SMART" id="SM00382">
    <property type="entry name" value="AAA"/>
    <property type="match status" value="1"/>
</dbReference>
<dbReference type="SMART" id="SM01086">
    <property type="entry name" value="ClpB_D2-small"/>
    <property type="match status" value="1"/>
</dbReference>
<dbReference type="SUPFAM" id="SSF52540">
    <property type="entry name" value="P-loop containing nucleoside triphosphate hydrolases"/>
    <property type="match status" value="1"/>
</dbReference>
<accession>A0KQI8</accession>
<sequence length="442" mass="49965">MSEMTPREIVHELDRHIIGQADAKRAVAVALRNRWRRMQLDEEMRHEVTPKNILMIGPTGVGKTEIARRLAKLANAPFIKVEATKFTEVGYVGKEVDSIIRDLTDAAIKLVRETEMEKMKYRAEEAAEERILDALLPNPRNSWGEEEKADNSNTRQIFRKKLREGQLDDKEIELELAASPMGVEIMTPPGMEEMANQLQGLFQNLGQNQKKKRKIKVKEAMKALIEEEAARLVNPEELKQKAIAAVENNGIVFLDEIDKICKRGESSGPDVSREGVQRDLLPLVEGCTVNTKHGMVKTDHILFVASGAFQIAKPSDLIPELQGRLPIRVELTALTTDDFERILTEPNASLTDQYQALMATEGVKIEFTKDGIRRLAEAAWQVNERTENIGARRLHTVMERLMEDISYDASEKSGETFVIDTDYVNAHLGKLIEDEDLSRFIL</sequence>
<gene>
    <name evidence="1" type="primary">hslU</name>
    <name type="ordered locus">AHA_4115</name>
</gene>
<protein>
    <recommendedName>
        <fullName evidence="1">ATP-dependent protease ATPase subunit HslU</fullName>
    </recommendedName>
    <alternativeName>
        <fullName evidence="1">Unfoldase HslU</fullName>
    </alternativeName>
</protein>
<feature type="chain" id="PRO_1000012696" description="ATP-dependent protease ATPase subunit HslU">
    <location>
        <begin position="1"/>
        <end position="442"/>
    </location>
</feature>
<feature type="binding site" evidence="1">
    <location>
        <position position="18"/>
    </location>
    <ligand>
        <name>ATP</name>
        <dbReference type="ChEBI" id="CHEBI:30616"/>
    </ligand>
</feature>
<feature type="binding site" evidence="1">
    <location>
        <begin position="60"/>
        <end position="65"/>
    </location>
    <ligand>
        <name>ATP</name>
        <dbReference type="ChEBI" id="CHEBI:30616"/>
    </ligand>
</feature>
<feature type="binding site" evidence="1">
    <location>
        <position position="255"/>
    </location>
    <ligand>
        <name>ATP</name>
        <dbReference type="ChEBI" id="CHEBI:30616"/>
    </ligand>
</feature>
<feature type="binding site" evidence="1">
    <location>
        <position position="320"/>
    </location>
    <ligand>
        <name>ATP</name>
        <dbReference type="ChEBI" id="CHEBI:30616"/>
    </ligand>
</feature>
<feature type="binding site" evidence="1">
    <location>
        <position position="392"/>
    </location>
    <ligand>
        <name>ATP</name>
        <dbReference type="ChEBI" id="CHEBI:30616"/>
    </ligand>
</feature>
<organism>
    <name type="scientific">Aeromonas hydrophila subsp. hydrophila (strain ATCC 7966 / DSM 30187 / BCRC 13018 / CCUG 14551 / JCM 1027 / KCTC 2358 / NCIMB 9240 / NCTC 8049)</name>
    <dbReference type="NCBI Taxonomy" id="380703"/>
    <lineage>
        <taxon>Bacteria</taxon>
        <taxon>Pseudomonadati</taxon>
        <taxon>Pseudomonadota</taxon>
        <taxon>Gammaproteobacteria</taxon>
        <taxon>Aeromonadales</taxon>
        <taxon>Aeromonadaceae</taxon>
        <taxon>Aeromonas</taxon>
    </lineage>
</organism>
<reference key="1">
    <citation type="journal article" date="2006" name="J. Bacteriol.">
        <title>Genome sequence of Aeromonas hydrophila ATCC 7966T: jack of all trades.</title>
        <authorList>
            <person name="Seshadri R."/>
            <person name="Joseph S.W."/>
            <person name="Chopra A.K."/>
            <person name="Sha J."/>
            <person name="Shaw J."/>
            <person name="Graf J."/>
            <person name="Haft D.H."/>
            <person name="Wu M."/>
            <person name="Ren Q."/>
            <person name="Rosovitz M.J."/>
            <person name="Madupu R."/>
            <person name="Tallon L."/>
            <person name="Kim M."/>
            <person name="Jin S."/>
            <person name="Vuong H."/>
            <person name="Stine O.C."/>
            <person name="Ali A."/>
            <person name="Horneman A.J."/>
            <person name="Heidelberg J.F."/>
        </authorList>
    </citation>
    <scope>NUCLEOTIDE SEQUENCE [LARGE SCALE GENOMIC DNA]</scope>
    <source>
        <strain>ATCC 7966 / DSM 30187 / BCRC 13018 / CCUG 14551 / JCM 1027 / KCTC 2358 / NCIMB 9240 / NCTC 8049</strain>
    </source>
</reference>
<proteinExistence type="inferred from homology"/>
<comment type="function">
    <text evidence="1">ATPase subunit of a proteasome-like degradation complex; this subunit has chaperone activity. The binding of ATP and its subsequent hydrolysis by HslU are essential for unfolding of protein substrates subsequently hydrolyzed by HslV. HslU recognizes the N-terminal part of its protein substrates and unfolds these before they are guided to HslV for hydrolysis.</text>
</comment>
<comment type="subunit">
    <text evidence="1">A double ring-shaped homohexamer of HslV is capped on each side by a ring-shaped HslU homohexamer. The assembly of the HslU/HslV complex is dependent on binding of ATP.</text>
</comment>
<comment type="subcellular location">
    <subcellularLocation>
        <location evidence="1">Cytoplasm</location>
    </subcellularLocation>
</comment>
<comment type="similarity">
    <text evidence="1">Belongs to the ClpX chaperone family. HslU subfamily.</text>
</comment>
<evidence type="ECO:0000255" key="1">
    <source>
        <dbReference type="HAMAP-Rule" id="MF_00249"/>
    </source>
</evidence>
<name>HSLU_AERHH</name>